<name>HISX_XANOR</name>
<reference key="1">
    <citation type="journal article" date="2005" name="Nucleic Acids Res.">
        <title>The genome sequence of Xanthomonas oryzae pathovar oryzae KACC10331, the bacterial blight pathogen of rice.</title>
        <authorList>
            <person name="Lee B.-M."/>
            <person name="Park Y.-J."/>
            <person name="Park D.-S."/>
            <person name="Kang H.-W."/>
            <person name="Kim J.-G."/>
            <person name="Song E.-S."/>
            <person name="Park I.-C."/>
            <person name="Yoon U.-H."/>
            <person name="Hahn J.-H."/>
            <person name="Koo B.-S."/>
            <person name="Lee G.-B."/>
            <person name="Kim H."/>
            <person name="Park H.-S."/>
            <person name="Yoon K.-O."/>
            <person name="Kim J.-H."/>
            <person name="Jung C.-H."/>
            <person name="Koh N.-H."/>
            <person name="Seo J.-S."/>
            <person name="Go S.-J."/>
        </authorList>
    </citation>
    <scope>NUCLEOTIDE SEQUENCE [LARGE SCALE GENOMIC DNA]</scope>
    <source>
        <strain>KACC10331 / KXO85</strain>
    </source>
</reference>
<dbReference type="EC" id="1.1.1.23" evidence="1"/>
<dbReference type="EMBL" id="AE013598">
    <property type="protein sequence ID" value="AAW75510.1"/>
    <property type="molecule type" value="Genomic_DNA"/>
</dbReference>
<dbReference type="SMR" id="Q5H0L1"/>
<dbReference type="STRING" id="291331.XOO2256"/>
<dbReference type="KEGG" id="xoo:XOO2256"/>
<dbReference type="HOGENOM" id="CLU_006732_3_0_6"/>
<dbReference type="UniPathway" id="UPA00031">
    <property type="reaction ID" value="UER00014"/>
</dbReference>
<dbReference type="Proteomes" id="UP000006735">
    <property type="component" value="Chromosome"/>
</dbReference>
<dbReference type="GO" id="GO:0005829">
    <property type="term" value="C:cytosol"/>
    <property type="evidence" value="ECO:0007669"/>
    <property type="project" value="TreeGrafter"/>
</dbReference>
<dbReference type="GO" id="GO:0004399">
    <property type="term" value="F:histidinol dehydrogenase activity"/>
    <property type="evidence" value="ECO:0007669"/>
    <property type="project" value="UniProtKB-UniRule"/>
</dbReference>
<dbReference type="GO" id="GO:0051287">
    <property type="term" value="F:NAD binding"/>
    <property type="evidence" value="ECO:0007669"/>
    <property type="project" value="InterPro"/>
</dbReference>
<dbReference type="GO" id="GO:0008270">
    <property type="term" value="F:zinc ion binding"/>
    <property type="evidence" value="ECO:0007669"/>
    <property type="project" value="UniProtKB-UniRule"/>
</dbReference>
<dbReference type="GO" id="GO:0000105">
    <property type="term" value="P:L-histidine biosynthetic process"/>
    <property type="evidence" value="ECO:0007669"/>
    <property type="project" value="UniProtKB-UniRule"/>
</dbReference>
<dbReference type="CDD" id="cd06572">
    <property type="entry name" value="Histidinol_dh"/>
    <property type="match status" value="1"/>
</dbReference>
<dbReference type="FunFam" id="3.40.50.1980:FF:000001">
    <property type="entry name" value="Histidinol dehydrogenase"/>
    <property type="match status" value="1"/>
</dbReference>
<dbReference type="Gene3D" id="1.20.5.1300">
    <property type="match status" value="1"/>
</dbReference>
<dbReference type="Gene3D" id="3.40.50.1980">
    <property type="entry name" value="Nitrogenase molybdenum iron protein domain"/>
    <property type="match status" value="2"/>
</dbReference>
<dbReference type="HAMAP" id="MF_01024">
    <property type="entry name" value="HisD"/>
    <property type="match status" value="1"/>
</dbReference>
<dbReference type="InterPro" id="IPR016161">
    <property type="entry name" value="Ald_DH/histidinol_DH"/>
</dbReference>
<dbReference type="InterPro" id="IPR001692">
    <property type="entry name" value="Histidinol_DH_CS"/>
</dbReference>
<dbReference type="InterPro" id="IPR022695">
    <property type="entry name" value="Histidinol_DH_monofunct"/>
</dbReference>
<dbReference type="InterPro" id="IPR012131">
    <property type="entry name" value="Hstdl_DH"/>
</dbReference>
<dbReference type="NCBIfam" id="TIGR00069">
    <property type="entry name" value="hisD"/>
    <property type="match status" value="1"/>
</dbReference>
<dbReference type="PANTHER" id="PTHR21256:SF2">
    <property type="entry name" value="HISTIDINE BIOSYNTHESIS TRIFUNCTIONAL PROTEIN"/>
    <property type="match status" value="1"/>
</dbReference>
<dbReference type="PANTHER" id="PTHR21256">
    <property type="entry name" value="HISTIDINOL DEHYDROGENASE HDH"/>
    <property type="match status" value="1"/>
</dbReference>
<dbReference type="Pfam" id="PF00815">
    <property type="entry name" value="Histidinol_dh"/>
    <property type="match status" value="1"/>
</dbReference>
<dbReference type="PIRSF" id="PIRSF000099">
    <property type="entry name" value="Histidinol_dh"/>
    <property type="match status" value="1"/>
</dbReference>
<dbReference type="PRINTS" id="PR00083">
    <property type="entry name" value="HOLDHDRGNASE"/>
</dbReference>
<dbReference type="SUPFAM" id="SSF53720">
    <property type="entry name" value="ALDH-like"/>
    <property type="match status" value="1"/>
</dbReference>
<dbReference type="PROSITE" id="PS00611">
    <property type="entry name" value="HISOL_DEHYDROGENASE"/>
    <property type="match status" value="1"/>
</dbReference>
<feature type="chain" id="PRO_0000135884" description="Histidinol dehydrogenase">
    <location>
        <begin position="1"/>
        <end position="431"/>
    </location>
</feature>
<feature type="active site" description="Proton acceptor" evidence="1">
    <location>
        <position position="326"/>
    </location>
</feature>
<feature type="active site" description="Proton acceptor" evidence="1">
    <location>
        <position position="327"/>
    </location>
</feature>
<feature type="binding site" evidence="1">
    <location>
        <position position="127"/>
    </location>
    <ligand>
        <name>NAD(+)</name>
        <dbReference type="ChEBI" id="CHEBI:57540"/>
    </ligand>
</feature>
<feature type="binding site" evidence="1">
    <location>
        <position position="189"/>
    </location>
    <ligand>
        <name>NAD(+)</name>
        <dbReference type="ChEBI" id="CHEBI:57540"/>
    </ligand>
</feature>
<feature type="binding site" evidence="1">
    <location>
        <position position="212"/>
    </location>
    <ligand>
        <name>NAD(+)</name>
        <dbReference type="ChEBI" id="CHEBI:57540"/>
    </ligand>
</feature>
<feature type="binding site" evidence="1">
    <location>
        <position position="237"/>
    </location>
    <ligand>
        <name>substrate</name>
    </ligand>
</feature>
<feature type="binding site" evidence="1">
    <location>
        <position position="259"/>
    </location>
    <ligand>
        <name>substrate</name>
    </ligand>
</feature>
<feature type="binding site" evidence="1">
    <location>
        <position position="259"/>
    </location>
    <ligand>
        <name>Zn(2+)</name>
        <dbReference type="ChEBI" id="CHEBI:29105"/>
    </ligand>
</feature>
<feature type="binding site" evidence="1">
    <location>
        <position position="262"/>
    </location>
    <ligand>
        <name>substrate</name>
    </ligand>
</feature>
<feature type="binding site" evidence="1">
    <location>
        <position position="262"/>
    </location>
    <ligand>
        <name>Zn(2+)</name>
        <dbReference type="ChEBI" id="CHEBI:29105"/>
    </ligand>
</feature>
<feature type="binding site" evidence="1">
    <location>
        <position position="327"/>
    </location>
    <ligand>
        <name>substrate</name>
    </ligand>
</feature>
<feature type="binding site" evidence="1">
    <location>
        <position position="360"/>
    </location>
    <ligand>
        <name>substrate</name>
    </ligand>
</feature>
<feature type="binding site" evidence="1">
    <location>
        <position position="360"/>
    </location>
    <ligand>
        <name>Zn(2+)</name>
        <dbReference type="ChEBI" id="CHEBI:29105"/>
    </ligand>
</feature>
<feature type="binding site" evidence="1">
    <location>
        <position position="414"/>
    </location>
    <ligand>
        <name>substrate</name>
    </ligand>
</feature>
<feature type="binding site" evidence="1">
    <location>
        <position position="419"/>
    </location>
    <ligand>
        <name>substrate</name>
    </ligand>
</feature>
<feature type="binding site" evidence="1">
    <location>
        <position position="419"/>
    </location>
    <ligand>
        <name>Zn(2+)</name>
        <dbReference type="ChEBI" id="CHEBI:29105"/>
    </ligand>
</feature>
<accession>Q5H0L1</accession>
<proteinExistence type="inferred from homology"/>
<gene>
    <name evidence="1" type="primary">hisD</name>
    <name type="ordered locus">XOO2256</name>
</gene>
<protein>
    <recommendedName>
        <fullName evidence="1">Histidinol dehydrogenase</fullName>
        <shortName evidence="1">HDH</shortName>
        <ecNumber evidence="1">1.1.1.23</ecNumber>
    </recommendedName>
</protein>
<sequence length="431" mass="44705">MKILDWSQLDVAARTDALTRPVQTVAAQTRNAVAALIADVRTRGDAALREITARFDGVSLERFAVSEAEFAAAEAAVAPELRQAMQDAVARIDTFHRAGMSEGYAVETAPGVVCEKIVRPIGRVGLYVPAGSAPLPSTALMLGVPARLAGCRAVVLCTPPRKDGSVDPAVLVAAWLTGVRRVFKLGGAQAIAAMAYGTESVPSCDKLFGPGNSYVTEAKQQVAQSGAAAIDMPAGPSEVLVIADAGAQAAFVAADLLSQAEHGADSQVLLLSDSDVLIDAVQAQLEIQLAHLSRADIARQALAQSRLIKVQTLDEAFAISNRYAPEHLILALREPRAWLAQVEAAGSVFLGDYTPEALGDYCSGTNHVLPTSGAARAYSGVSVASFQNMFSVQAASKAGIAGIGECALILARAEGLDAHANAVALRMGVAA</sequence>
<keyword id="KW-0028">Amino-acid biosynthesis</keyword>
<keyword id="KW-0368">Histidine biosynthesis</keyword>
<keyword id="KW-0479">Metal-binding</keyword>
<keyword id="KW-0520">NAD</keyword>
<keyword id="KW-0560">Oxidoreductase</keyword>
<keyword id="KW-1185">Reference proteome</keyword>
<keyword id="KW-0862">Zinc</keyword>
<comment type="function">
    <text evidence="1">Catalyzes the sequential NAD-dependent oxidations of L-histidinol to L-histidinaldehyde and then to L-histidine.</text>
</comment>
<comment type="catalytic activity">
    <reaction evidence="1">
        <text>L-histidinol + 2 NAD(+) + H2O = L-histidine + 2 NADH + 3 H(+)</text>
        <dbReference type="Rhea" id="RHEA:20641"/>
        <dbReference type="ChEBI" id="CHEBI:15377"/>
        <dbReference type="ChEBI" id="CHEBI:15378"/>
        <dbReference type="ChEBI" id="CHEBI:57540"/>
        <dbReference type="ChEBI" id="CHEBI:57595"/>
        <dbReference type="ChEBI" id="CHEBI:57699"/>
        <dbReference type="ChEBI" id="CHEBI:57945"/>
        <dbReference type="EC" id="1.1.1.23"/>
    </reaction>
</comment>
<comment type="cofactor">
    <cofactor evidence="1">
        <name>Zn(2+)</name>
        <dbReference type="ChEBI" id="CHEBI:29105"/>
    </cofactor>
    <text evidence="1">Binds 1 zinc ion per subunit.</text>
</comment>
<comment type="pathway">
    <text evidence="1">Amino-acid biosynthesis; L-histidine biosynthesis; L-histidine from 5-phospho-alpha-D-ribose 1-diphosphate: step 9/9.</text>
</comment>
<comment type="similarity">
    <text evidence="1">Belongs to the histidinol dehydrogenase family.</text>
</comment>
<organism>
    <name type="scientific">Xanthomonas oryzae pv. oryzae (strain KACC10331 / KXO85)</name>
    <dbReference type="NCBI Taxonomy" id="291331"/>
    <lineage>
        <taxon>Bacteria</taxon>
        <taxon>Pseudomonadati</taxon>
        <taxon>Pseudomonadota</taxon>
        <taxon>Gammaproteobacteria</taxon>
        <taxon>Lysobacterales</taxon>
        <taxon>Lysobacteraceae</taxon>
        <taxon>Xanthomonas</taxon>
    </lineage>
</organism>
<evidence type="ECO:0000255" key="1">
    <source>
        <dbReference type="HAMAP-Rule" id="MF_01024"/>
    </source>
</evidence>